<reference key="1">
    <citation type="journal article" date="1996" name="Endocrine">
        <title>A transaldolase. An enzyme implicated in crab steroidogenesis.</title>
        <authorList>
            <person name="Lachaise F."/>
            <person name="Somme G."/>
            <person name="Carpentier G."/>
            <person name="Granjeon E."/>
            <person name="Webster S."/>
            <person name="Baghdassarian D."/>
        </authorList>
    </citation>
    <scope>PROTEIN SEQUENCE</scope>
</reference>
<dbReference type="GO" id="GO:0005737">
    <property type="term" value="C:cytoplasm"/>
    <property type="evidence" value="ECO:0007669"/>
    <property type="project" value="UniProtKB-KW"/>
</dbReference>
<dbReference type="GO" id="GO:0005856">
    <property type="term" value="C:cytoskeleton"/>
    <property type="evidence" value="ECO:0007669"/>
    <property type="project" value="UniProtKB-SubCell"/>
</dbReference>
<dbReference type="GO" id="GO:0005524">
    <property type="term" value="F:ATP binding"/>
    <property type="evidence" value="ECO:0007669"/>
    <property type="project" value="UniProtKB-KW"/>
</dbReference>
<comment type="function">
    <text>Actins are highly conserved proteins that are involved in various types of cell motility and are ubiquitously expressed in all eukaryotic cells.</text>
</comment>
<comment type="subcellular location">
    <subcellularLocation>
        <location>Cytoplasm</location>
        <location>Cytoskeleton</location>
    </subcellularLocation>
</comment>
<comment type="miscellaneous">
    <text>On the 2D-gel the determined pI of this protein is: 6.8, its MW is: 46 kDa.</text>
</comment>
<comment type="similarity">
    <text evidence="1">Belongs to the actin family.</text>
</comment>
<feature type="chain" id="PRO_0000088906" description="Actin">
    <location>
        <begin position="1" status="less than"/>
        <end position="8" status="greater than"/>
    </location>
</feature>
<feature type="non-terminal residue">
    <location>
        <position position="1"/>
    </location>
</feature>
<feature type="non-terminal residue">
    <location>
        <position position="8"/>
    </location>
</feature>
<evidence type="ECO:0000305" key="1"/>
<protein>
    <recommendedName>
        <fullName>Actin</fullName>
    </recommendedName>
</protein>
<proteinExistence type="evidence at protein level"/>
<accession>P80709</accession>
<organism>
    <name type="scientific">Carcinus maenas</name>
    <name type="common">Common shore crab</name>
    <name type="synonym">Green crab</name>
    <dbReference type="NCBI Taxonomy" id="6759"/>
    <lineage>
        <taxon>Eukaryota</taxon>
        <taxon>Metazoa</taxon>
        <taxon>Ecdysozoa</taxon>
        <taxon>Arthropoda</taxon>
        <taxon>Crustacea</taxon>
        <taxon>Multicrustacea</taxon>
        <taxon>Malacostraca</taxon>
        <taxon>Eumalacostraca</taxon>
        <taxon>Eucarida</taxon>
        <taxon>Decapoda</taxon>
        <taxon>Pleocyemata</taxon>
        <taxon>Brachyura</taxon>
        <taxon>Eubrachyura</taxon>
        <taxon>Portunoidea</taxon>
        <taxon>Carcinidae</taxon>
        <taxon>Carcinus</taxon>
    </lineage>
</organism>
<name>ACT_CARMA</name>
<sequence>KCDVDIRK</sequence>
<keyword id="KW-0067">ATP-binding</keyword>
<keyword id="KW-0963">Cytoplasm</keyword>
<keyword id="KW-0206">Cytoskeleton</keyword>
<keyword id="KW-0903">Direct protein sequencing</keyword>
<keyword id="KW-0547">Nucleotide-binding</keyword>